<name>RIMP_BURM9</name>
<keyword id="KW-0963">Cytoplasm</keyword>
<keyword id="KW-0690">Ribosome biogenesis</keyword>
<proteinExistence type="inferred from homology"/>
<gene>
    <name evidence="1" type="primary">rimP</name>
    <name type="ordered locus">BMA10229_A0177</name>
</gene>
<evidence type="ECO:0000255" key="1">
    <source>
        <dbReference type="HAMAP-Rule" id="MF_01077"/>
    </source>
</evidence>
<comment type="function">
    <text evidence="1">Required for maturation of 30S ribosomal subunits.</text>
</comment>
<comment type="subcellular location">
    <subcellularLocation>
        <location evidence="1">Cytoplasm</location>
    </subcellularLocation>
</comment>
<comment type="similarity">
    <text evidence="1">Belongs to the RimP family.</text>
</comment>
<accession>A2S2L3</accession>
<reference key="1">
    <citation type="journal article" date="2010" name="Genome Biol. Evol.">
        <title>Continuing evolution of Burkholderia mallei through genome reduction and large-scale rearrangements.</title>
        <authorList>
            <person name="Losada L."/>
            <person name="Ronning C.M."/>
            <person name="DeShazer D."/>
            <person name="Woods D."/>
            <person name="Fedorova N."/>
            <person name="Kim H.S."/>
            <person name="Shabalina S.A."/>
            <person name="Pearson T.R."/>
            <person name="Brinkac L."/>
            <person name="Tan P."/>
            <person name="Nandi T."/>
            <person name="Crabtree J."/>
            <person name="Badger J."/>
            <person name="Beckstrom-Sternberg S."/>
            <person name="Saqib M."/>
            <person name="Schutzer S.E."/>
            <person name="Keim P."/>
            <person name="Nierman W.C."/>
        </authorList>
    </citation>
    <scope>NUCLEOTIDE SEQUENCE [LARGE SCALE GENOMIC DNA]</scope>
    <source>
        <strain>NCTC 10229</strain>
    </source>
</reference>
<sequence>MQLTELIETTVTGLGYELVDLERTGRGMVCVYIDQPAGITIDDCEKVTRQLQHVLTVENIDYERLEVSSPGLDRPLKKLADFTRFAGSEAVITLKKPLDGRKTYRGILHAPNGETIGLEFERKKGEAAMLDFTLADIDKARLIPHVDFRSRKQ</sequence>
<dbReference type="EMBL" id="CP000546">
    <property type="protein sequence ID" value="ABN03360.1"/>
    <property type="molecule type" value="Genomic_DNA"/>
</dbReference>
<dbReference type="RefSeq" id="WP_004193908.1">
    <property type="nucleotide sequence ID" value="NC_008836.1"/>
</dbReference>
<dbReference type="SMR" id="A2S2L3"/>
<dbReference type="GeneID" id="93060071"/>
<dbReference type="KEGG" id="bml:BMA10229_A0177"/>
<dbReference type="HOGENOM" id="CLU_070525_1_0_4"/>
<dbReference type="Proteomes" id="UP000002283">
    <property type="component" value="Chromosome I"/>
</dbReference>
<dbReference type="GO" id="GO:0005829">
    <property type="term" value="C:cytosol"/>
    <property type="evidence" value="ECO:0007669"/>
    <property type="project" value="TreeGrafter"/>
</dbReference>
<dbReference type="GO" id="GO:0000028">
    <property type="term" value="P:ribosomal small subunit assembly"/>
    <property type="evidence" value="ECO:0007669"/>
    <property type="project" value="TreeGrafter"/>
</dbReference>
<dbReference type="GO" id="GO:0006412">
    <property type="term" value="P:translation"/>
    <property type="evidence" value="ECO:0007669"/>
    <property type="project" value="TreeGrafter"/>
</dbReference>
<dbReference type="CDD" id="cd01734">
    <property type="entry name" value="YlxS_C"/>
    <property type="match status" value="1"/>
</dbReference>
<dbReference type="Gene3D" id="2.30.30.180">
    <property type="entry name" value="Ribosome maturation factor RimP, C-terminal domain"/>
    <property type="match status" value="1"/>
</dbReference>
<dbReference type="Gene3D" id="3.30.300.70">
    <property type="entry name" value="RimP-like superfamily, N-terminal"/>
    <property type="match status" value="1"/>
</dbReference>
<dbReference type="HAMAP" id="MF_01077">
    <property type="entry name" value="RimP"/>
    <property type="match status" value="1"/>
</dbReference>
<dbReference type="InterPro" id="IPR003728">
    <property type="entry name" value="Ribosome_maturation_RimP"/>
</dbReference>
<dbReference type="InterPro" id="IPR028998">
    <property type="entry name" value="RimP_C"/>
</dbReference>
<dbReference type="InterPro" id="IPR036847">
    <property type="entry name" value="RimP_C_sf"/>
</dbReference>
<dbReference type="InterPro" id="IPR028989">
    <property type="entry name" value="RimP_N"/>
</dbReference>
<dbReference type="InterPro" id="IPR035956">
    <property type="entry name" value="RimP_N_sf"/>
</dbReference>
<dbReference type="NCBIfam" id="NF000929">
    <property type="entry name" value="PRK00092.2-1"/>
    <property type="match status" value="1"/>
</dbReference>
<dbReference type="PANTHER" id="PTHR33867">
    <property type="entry name" value="RIBOSOME MATURATION FACTOR RIMP"/>
    <property type="match status" value="1"/>
</dbReference>
<dbReference type="PANTHER" id="PTHR33867:SF1">
    <property type="entry name" value="RIBOSOME MATURATION FACTOR RIMP"/>
    <property type="match status" value="1"/>
</dbReference>
<dbReference type="Pfam" id="PF17384">
    <property type="entry name" value="DUF150_C"/>
    <property type="match status" value="1"/>
</dbReference>
<dbReference type="Pfam" id="PF02576">
    <property type="entry name" value="RimP_N"/>
    <property type="match status" value="1"/>
</dbReference>
<dbReference type="SUPFAM" id="SSF74942">
    <property type="entry name" value="YhbC-like, C-terminal domain"/>
    <property type="match status" value="1"/>
</dbReference>
<dbReference type="SUPFAM" id="SSF75420">
    <property type="entry name" value="YhbC-like, N-terminal domain"/>
    <property type="match status" value="1"/>
</dbReference>
<feature type="chain" id="PRO_1000064692" description="Ribosome maturation factor RimP">
    <location>
        <begin position="1"/>
        <end position="153"/>
    </location>
</feature>
<organism>
    <name type="scientific">Burkholderia mallei (strain NCTC 10229)</name>
    <dbReference type="NCBI Taxonomy" id="412022"/>
    <lineage>
        <taxon>Bacteria</taxon>
        <taxon>Pseudomonadati</taxon>
        <taxon>Pseudomonadota</taxon>
        <taxon>Betaproteobacteria</taxon>
        <taxon>Burkholderiales</taxon>
        <taxon>Burkholderiaceae</taxon>
        <taxon>Burkholderia</taxon>
        <taxon>pseudomallei group</taxon>
    </lineage>
</organism>
<protein>
    <recommendedName>
        <fullName evidence="1">Ribosome maturation factor RimP</fullName>
    </recommendedName>
</protein>